<keyword id="KW-0460">Magnesium</keyword>
<keyword id="KW-0479">Metal-binding</keyword>
<keyword id="KW-0784">Thiamine biosynthesis</keyword>
<keyword id="KW-0808">Transferase</keyword>
<feature type="chain" id="PRO_0000336430" description="Thiamine-phosphate synthase">
    <location>
        <begin position="1"/>
        <end position="229"/>
    </location>
</feature>
<feature type="binding site" evidence="1">
    <location>
        <begin position="38"/>
        <end position="42"/>
    </location>
    <ligand>
        <name>4-amino-2-methyl-5-(diphosphooxymethyl)pyrimidine</name>
        <dbReference type="ChEBI" id="CHEBI:57841"/>
    </ligand>
</feature>
<feature type="binding site" evidence="1">
    <location>
        <position position="73"/>
    </location>
    <ligand>
        <name>4-amino-2-methyl-5-(diphosphooxymethyl)pyrimidine</name>
        <dbReference type="ChEBI" id="CHEBI:57841"/>
    </ligand>
</feature>
<feature type="binding site" evidence="1">
    <location>
        <position position="74"/>
    </location>
    <ligand>
        <name>Mg(2+)</name>
        <dbReference type="ChEBI" id="CHEBI:18420"/>
    </ligand>
</feature>
<feature type="binding site" evidence="1">
    <location>
        <position position="93"/>
    </location>
    <ligand>
        <name>Mg(2+)</name>
        <dbReference type="ChEBI" id="CHEBI:18420"/>
    </ligand>
</feature>
<feature type="binding site" evidence="1">
    <location>
        <position position="111"/>
    </location>
    <ligand>
        <name>4-amino-2-methyl-5-(diphosphooxymethyl)pyrimidine</name>
        <dbReference type="ChEBI" id="CHEBI:57841"/>
    </ligand>
</feature>
<feature type="binding site" evidence="1">
    <location>
        <begin position="137"/>
        <end position="139"/>
    </location>
    <ligand>
        <name>2-[(2R,5Z)-2-carboxy-4-methylthiazol-5(2H)-ylidene]ethyl phosphate</name>
        <dbReference type="ChEBI" id="CHEBI:62899"/>
    </ligand>
</feature>
<feature type="binding site" evidence="1">
    <location>
        <position position="140"/>
    </location>
    <ligand>
        <name>4-amino-2-methyl-5-(diphosphooxymethyl)pyrimidine</name>
        <dbReference type="ChEBI" id="CHEBI:57841"/>
    </ligand>
</feature>
<feature type="binding site" evidence="1">
    <location>
        <position position="169"/>
    </location>
    <ligand>
        <name>2-[(2R,5Z)-2-carboxy-4-methylthiazol-5(2H)-ylidene]ethyl phosphate</name>
        <dbReference type="ChEBI" id="CHEBI:62899"/>
    </ligand>
</feature>
<feature type="binding site" evidence="1">
    <location>
        <begin position="189"/>
        <end position="190"/>
    </location>
    <ligand>
        <name>2-[(2R,5Z)-2-carboxy-4-methylthiazol-5(2H)-ylidene]ethyl phosphate</name>
        <dbReference type="ChEBI" id="CHEBI:62899"/>
    </ligand>
</feature>
<reference key="1">
    <citation type="journal article" date="2007" name="PLoS ONE">
        <title>A glimpse of streptococcal toxic shock syndrome from comparative genomics of S. suis 2 Chinese isolates.</title>
        <authorList>
            <person name="Chen C."/>
            <person name="Tang J."/>
            <person name="Dong W."/>
            <person name="Wang C."/>
            <person name="Feng Y."/>
            <person name="Wang J."/>
            <person name="Zheng F."/>
            <person name="Pan X."/>
            <person name="Liu D."/>
            <person name="Li M."/>
            <person name="Song Y."/>
            <person name="Zhu X."/>
            <person name="Sun H."/>
            <person name="Feng T."/>
            <person name="Guo Z."/>
            <person name="Ju A."/>
            <person name="Ge J."/>
            <person name="Dong Y."/>
            <person name="Sun W."/>
            <person name="Jiang Y."/>
            <person name="Wang J."/>
            <person name="Yan J."/>
            <person name="Yang H."/>
            <person name="Wang X."/>
            <person name="Gao G.F."/>
            <person name="Yang R."/>
            <person name="Wang J."/>
            <person name="Yu J."/>
        </authorList>
    </citation>
    <scope>NUCLEOTIDE SEQUENCE [LARGE SCALE GENOMIC DNA]</scope>
    <source>
        <strain>98HAH33</strain>
    </source>
</reference>
<organism>
    <name type="scientific">Streptococcus suis (strain 98HAH33)</name>
    <dbReference type="NCBI Taxonomy" id="391296"/>
    <lineage>
        <taxon>Bacteria</taxon>
        <taxon>Bacillati</taxon>
        <taxon>Bacillota</taxon>
        <taxon>Bacilli</taxon>
        <taxon>Lactobacillales</taxon>
        <taxon>Streptococcaceae</taxon>
        <taxon>Streptococcus</taxon>
    </lineage>
</organism>
<comment type="function">
    <text evidence="1">Condenses 4-methyl-5-(beta-hydroxyethyl)thiazole monophosphate (THZ-P) and 2-methyl-4-amino-5-hydroxymethyl pyrimidine pyrophosphate (HMP-PP) to form thiamine monophosphate (TMP).</text>
</comment>
<comment type="catalytic activity">
    <reaction evidence="1">
        <text>2-[(2R,5Z)-2-carboxy-4-methylthiazol-5(2H)-ylidene]ethyl phosphate + 4-amino-2-methyl-5-(diphosphooxymethyl)pyrimidine + 2 H(+) = thiamine phosphate + CO2 + diphosphate</text>
        <dbReference type="Rhea" id="RHEA:47844"/>
        <dbReference type="ChEBI" id="CHEBI:15378"/>
        <dbReference type="ChEBI" id="CHEBI:16526"/>
        <dbReference type="ChEBI" id="CHEBI:33019"/>
        <dbReference type="ChEBI" id="CHEBI:37575"/>
        <dbReference type="ChEBI" id="CHEBI:57841"/>
        <dbReference type="ChEBI" id="CHEBI:62899"/>
        <dbReference type="EC" id="2.5.1.3"/>
    </reaction>
</comment>
<comment type="catalytic activity">
    <reaction evidence="1">
        <text>2-(2-carboxy-4-methylthiazol-5-yl)ethyl phosphate + 4-amino-2-methyl-5-(diphosphooxymethyl)pyrimidine + 2 H(+) = thiamine phosphate + CO2 + diphosphate</text>
        <dbReference type="Rhea" id="RHEA:47848"/>
        <dbReference type="ChEBI" id="CHEBI:15378"/>
        <dbReference type="ChEBI" id="CHEBI:16526"/>
        <dbReference type="ChEBI" id="CHEBI:33019"/>
        <dbReference type="ChEBI" id="CHEBI:37575"/>
        <dbReference type="ChEBI" id="CHEBI:57841"/>
        <dbReference type="ChEBI" id="CHEBI:62890"/>
        <dbReference type="EC" id="2.5.1.3"/>
    </reaction>
</comment>
<comment type="catalytic activity">
    <reaction evidence="1">
        <text>4-methyl-5-(2-phosphooxyethyl)-thiazole + 4-amino-2-methyl-5-(diphosphooxymethyl)pyrimidine + H(+) = thiamine phosphate + diphosphate</text>
        <dbReference type="Rhea" id="RHEA:22328"/>
        <dbReference type="ChEBI" id="CHEBI:15378"/>
        <dbReference type="ChEBI" id="CHEBI:33019"/>
        <dbReference type="ChEBI" id="CHEBI:37575"/>
        <dbReference type="ChEBI" id="CHEBI:57841"/>
        <dbReference type="ChEBI" id="CHEBI:58296"/>
        <dbReference type="EC" id="2.5.1.3"/>
    </reaction>
</comment>
<comment type="cofactor">
    <cofactor evidence="1">
        <name>Mg(2+)</name>
        <dbReference type="ChEBI" id="CHEBI:18420"/>
    </cofactor>
    <text evidence="1">Binds 1 Mg(2+) ion per subunit.</text>
</comment>
<comment type="pathway">
    <text evidence="1">Cofactor biosynthesis; thiamine diphosphate biosynthesis; thiamine phosphate from 4-amino-2-methyl-5-diphosphomethylpyrimidine and 4-methyl-5-(2-phosphoethyl)-thiazole: step 1/1.</text>
</comment>
<comment type="similarity">
    <text evidence="1">Belongs to the thiamine-phosphate synthase family.</text>
</comment>
<dbReference type="EC" id="2.5.1.3" evidence="1"/>
<dbReference type="EMBL" id="CP000408">
    <property type="protein sequence ID" value="ABP91893.1"/>
    <property type="molecule type" value="Genomic_DNA"/>
</dbReference>
<dbReference type="SMR" id="A4W0K4"/>
<dbReference type="KEGG" id="ssv:SSU98_0735"/>
<dbReference type="HOGENOM" id="CLU_018272_3_2_9"/>
<dbReference type="UniPathway" id="UPA00060">
    <property type="reaction ID" value="UER00141"/>
</dbReference>
<dbReference type="GO" id="GO:0005737">
    <property type="term" value="C:cytoplasm"/>
    <property type="evidence" value="ECO:0007669"/>
    <property type="project" value="TreeGrafter"/>
</dbReference>
<dbReference type="GO" id="GO:0000287">
    <property type="term" value="F:magnesium ion binding"/>
    <property type="evidence" value="ECO:0007669"/>
    <property type="project" value="UniProtKB-UniRule"/>
</dbReference>
<dbReference type="GO" id="GO:0004789">
    <property type="term" value="F:thiamine-phosphate diphosphorylase activity"/>
    <property type="evidence" value="ECO:0007669"/>
    <property type="project" value="UniProtKB-UniRule"/>
</dbReference>
<dbReference type="GO" id="GO:0009228">
    <property type="term" value="P:thiamine biosynthetic process"/>
    <property type="evidence" value="ECO:0007669"/>
    <property type="project" value="UniProtKB-KW"/>
</dbReference>
<dbReference type="GO" id="GO:0009229">
    <property type="term" value="P:thiamine diphosphate biosynthetic process"/>
    <property type="evidence" value="ECO:0007669"/>
    <property type="project" value="UniProtKB-UniRule"/>
</dbReference>
<dbReference type="CDD" id="cd00564">
    <property type="entry name" value="TMP_TenI"/>
    <property type="match status" value="1"/>
</dbReference>
<dbReference type="FunFam" id="3.20.20.70:FF:000096">
    <property type="entry name" value="Thiamine-phosphate synthase"/>
    <property type="match status" value="1"/>
</dbReference>
<dbReference type="Gene3D" id="3.20.20.70">
    <property type="entry name" value="Aldolase class I"/>
    <property type="match status" value="1"/>
</dbReference>
<dbReference type="HAMAP" id="MF_00097">
    <property type="entry name" value="TMP_synthase"/>
    <property type="match status" value="1"/>
</dbReference>
<dbReference type="InterPro" id="IPR013785">
    <property type="entry name" value="Aldolase_TIM"/>
</dbReference>
<dbReference type="InterPro" id="IPR036206">
    <property type="entry name" value="ThiamineP_synth_sf"/>
</dbReference>
<dbReference type="InterPro" id="IPR022998">
    <property type="entry name" value="ThiamineP_synth_TenI"/>
</dbReference>
<dbReference type="InterPro" id="IPR034291">
    <property type="entry name" value="TMP_synthase"/>
</dbReference>
<dbReference type="NCBIfam" id="TIGR00693">
    <property type="entry name" value="thiE"/>
    <property type="match status" value="1"/>
</dbReference>
<dbReference type="PANTHER" id="PTHR20857">
    <property type="entry name" value="THIAMINE-PHOSPHATE PYROPHOSPHORYLASE"/>
    <property type="match status" value="1"/>
</dbReference>
<dbReference type="PANTHER" id="PTHR20857:SF15">
    <property type="entry name" value="THIAMINE-PHOSPHATE SYNTHASE"/>
    <property type="match status" value="1"/>
</dbReference>
<dbReference type="Pfam" id="PF02581">
    <property type="entry name" value="TMP-TENI"/>
    <property type="match status" value="1"/>
</dbReference>
<dbReference type="SUPFAM" id="SSF51391">
    <property type="entry name" value="Thiamin phosphate synthase"/>
    <property type="match status" value="1"/>
</dbReference>
<accession>A4W0K4</accession>
<sequence length="229" mass="24866">MNRKMLQVYFICGTSDCPKGKFLDVLEKALQAGITCFQFREKGEQGLTGADKLLLAKQVQHLCHRYQVPLIINDDVELARAIDADGIHLGQEDLSVVEARQLFPGKIIGLSVGTKEEYLNSPIDLVDYIGSGPVFPTLSKDDASPAIGMDGLKQLRKLNSDIPMVAIGGLSAKDCKEVLQAGADGIAVISAISHAEDPYKATKILVDGMQAMILKFNQVESNKQILKNP</sequence>
<proteinExistence type="inferred from homology"/>
<name>THIE_STRS2</name>
<evidence type="ECO:0000255" key="1">
    <source>
        <dbReference type="HAMAP-Rule" id="MF_00097"/>
    </source>
</evidence>
<gene>
    <name evidence="1" type="primary">thiE</name>
    <name type="ordered locus">SSU98_0735</name>
</gene>
<protein>
    <recommendedName>
        <fullName evidence="1">Thiamine-phosphate synthase</fullName>
        <shortName evidence="1">TP synthase</shortName>
        <shortName evidence="1">TPS</shortName>
        <ecNumber evidence="1">2.5.1.3</ecNumber>
    </recommendedName>
    <alternativeName>
        <fullName evidence="1">Thiamine-phosphate pyrophosphorylase</fullName>
        <shortName evidence="1">TMP pyrophosphorylase</shortName>
        <shortName evidence="1">TMP-PPase</shortName>
    </alternativeName>
</protein>